<name>YOAH_SHIB3</name>
<organism>
    <name type="scientific">Shigella boydii serotype 18 (strain CDC 3083-94 / BS512)</name>
    <dbReference type="NCBI Taxonomy" id="344609"/>
    <lineage>
        <taxon>Bacteria</taxon>
        <taxon>Pseudomonadati</taxon>
        <taxon>Pseudomonadota</taxon>
        <taxon>Gammaproteobacteria</taxon>
        <taxon>Enterobacterales</taxon>
        <taxon>Enterobacteriaceae</taxon>
        <taxon>Shigella</taxon>
    </lineage>
</organism>
<feature type="chain" id="PRO_1000127061" description="UPF0181 protein YoaH">
    <location>
        <begin position="1"/>
        <end position="59"/>
    </location>
</feature>
<sequence>MFAGLPSLTHEQQQKAVERIQELMAQGMSSGQAIALVAEELRANHSGERIVARFEDEDE</sequence>
<proteinExistence type="inferred from homology"/>
<accession>B2U447</accession>
<protein>
    <recommendedName>
        <fullName evidence="1">UPF0181 protein YoaH</fullName>
    </recommendedName>
</protein>
<comment type="similarity">
    <text evidence="1">Belongs to the UPF0181 family.</text>
</comment>
<keyword id="KW-1185">Reference proteome</keyword>
<evidence type="ECO:0000255" key="1">
    <source>
        <dbReference type="HAMAP-Rule" id="MF_00507"/>
    </source>
</evidence>
<reference key="1">
    <citation type="submission" date="2008-05" db="EMBL/GenBank/DDBJ databases">
        <title>Complete sequence of Shigella boydii serotype 18 strain BS512.</title>
        <authorList>
            <person name="Rasko D.A."/>
            <person name="Rosovitz M."/>
            <person name="Maurelli A.T."/>
            <person name="Myers G."/>
            <person name="Seshadri R."/>
            <person name="Cer R."/>
            <person name="Jiang L."/>
            <person name="Ravel J."/>
            <person name="Sebastian Y."/>
        </authorList>
    </citation>
    <scope>NUCLEOTIDE SEQUENCE [LARGE SCALE GENOMIC DNA]</scope>
    <source>
        <strain>CDC 3083-94 / BS512</strain>
    </source>
</reference>
<gene>
    <name evidence="1" type="primary">yoaH</name>
    <name type="ordered locus">SbBS512_E2072</name>
</gene>
<dbReference type="EMBL" id="CP001063">
    <property type="protein sequence ID" value="ACD08776.1"/>
    <property type="molecule type" value="Genomic_DNA"/>
</dbReference>
<dbReference type="RefSeq" id="WP_000457334.1">
    <property type="nucleotide sequence ID" value="NC_010658.1"/>
</dbReference>
<dbReference type="SMR" id="B2U447"/>
<dbReference type="STRING" id="344609.SbBS512_E2072"/>
<dbReference type="KEGG" id="sbc:SbBS512_E2072"/>
<dbReference type="HOGENOM" id="CLU_185263_0_0_6"/>
<dbReference type="Proteomes" id="UP000001030">
    <property type="component" value="Chromosome"/>
</dbReference>
<dbReference type="HAMAP" id="MF_00507">
    <property type="entry name" value="UPF0181"/>
    <property type="match status" value="1"/>
</dbReference>
<dbReference type="InterPro" id="IPR005371">
    <property type="entry name" value="UPF0181"/>
</dbReference>
<dbReference type="NCBIfam" id="NF003476">
    <property type="entry name" value="PRK05114.1"/>
    <property type="match status" value="1"/>
</dbReference>
<dbReference type="Pfam" id="PF03701">
    <property type="entry name" value="UPF0181"/>
    <property type="match status" value="1"/>
</dbReference>